<gene>
    <name evidence="1" type="primary">cas1-1</name>
    <name type="ordered locus">PAE0081</name>
</gene>
<name>CAS1A_PYRAE</name>
<proteinExistence type="inferred from homology"/>
<sequence>MEVVVKDWGVSLGYSRGALVIKKRGGVDRIPLFQVDRIWILTGGVSISSRLVRALSHHFIDVVFFDAKGNPVARLFPPEANGTVTHRRAQYEAYLTGRGFELAKLVTYGKLINQARALRRLGQWKREHYGALAEAASKIADLAGRIPSCADVQCVLGHEGAAASLYWDAVSKTTGLPGRNPEAADPLNLALNYGYGVLKYAVWRQAVIHGLDPYAGYIHADKSGRPSLVLDLMEEFRPHVDLLVIRLRPSADWADGGVLKREIRAMLVEEWTGERLEPVIARQVGLAVAHLHGQRAYTPHQL</sequence>
<feature type="chain" id="PRO_0000417107" description="CRISPR-associated endonuclease Cas1 1">
    <location>
        <begin position="1"/>
        <end position="302"/>
    </location>
</feature>
<feature type="binding site" evidence="1">
    <location>
        <position position="159"/>
    </location>
    <ligand>
        <name>Mn(2+)</name>
        <dbReference type="ChEBI" id="CHEBI:29035"/>
    </ligand>
</feature>
<feature type="binding site" evidence="1">
    <location>
        <position position="219"/>
    </location>
    <ligand>
        <name>Mn(2+)</name>
        <dbReference type="ChEBI" id="CHEBI:29035"/>
    </ligand>
</feature>
<feature type="binding site" evidence="1">
    <location>
        <position position="234"/>
    </location>
    <ligand>
        <name>Mn(2+)</name>
        <dbReference type="ChEBI" id="CHEBI:29035"/>
    </ligand>
</feature>
<protein>
    <recommendedName>
        <fullName evidence="1">CRISPR-associated endonuclease Cas1 1</fullName>
        <ecNumber evidence="1">3.1.-.-</ecNumber>
    </recommendedName>
</protein>
<dbReference type="EC" id="3.1.-.-" evidence="1"/>
<dbReference type="EMBL" id="AE009441">
    <property type="protein sequence ID" value="AAL62548.1"/>
    <property type="molecule type" value="Genomic_DNA"/>
</dbReference>
<dbReference type="SMR" id="Q8ZZU1"/>
<dbReference type="STRING" id="178306.PAE0081"/>
<dbReference type="EnsemblBacteria" id="AAL62548">
    <property type="protein sequence ID" value="AAL62548"/>
    <property type="gene ID" value="PAE0081"/>
</dbReference>
<dbReference type="KEGG" id="pai:PAE0081"/>
<dbReference type="PATRIC" id="fig|178306.9.peg.56"/>
<dbReference type="eggNOG" id="arCOG01452">
    <property type="taxonomic scope" value="Archaea"/>
</dbReference>
<dbReference type="HOGENOM" id="CLU_052779_0_0_2"/>
<dbReference type="InParanoid" id="Q8ZZU1"/>
<dbReference type="Proteomes" id="UP000002439">
    <property type="component" value="Chromosome"/>
</dbReference>
<dbReference type="GO" id="GO:0003677">
    <property type="term" value="F:DNA binding"/>
    <property type="evidence" value="ECO:0007669"/>
    <property type="project" value="UniProtKB-KW"/>
</dbReference>
<dbReference type="GO" id="GO:0004519">
    <property type="term" value="F:endonuclease activity"/>
    <property type="evidence" value="ECO:0000318"/>
    <property type="project" value="GO_Central"/>
</dbReference>
<dbReference type="GO" id="GO:0046872">
    <property type="term" value="F:metal ion binding"/>
    <property type="evidence" value="ECO:0007669"/>
    <property type="project" value="UniProtKB-UniRule"/>
</dbReference>
<dbReference type="GO" id="GO:0099048">
    <property type="term" value="P:CRISPR-cas system"/>
    <property type="evidence" value="ECO:0000318"/>
    <property type="project" value="GO_Central"/>
</dbReference>
<dbReference type="GO" id="GO:0051607">
    <property type="term" value="P:defense response to virus"/>
    <property type="evidence" value="ECO:0007669"/>
    <property type="project" value="UniProtKB-UniRule"/>
</dbReference>
<dbReference type="GO" id="GO:0043571">
    <property type="term" value="P:maintenance of CRISPR repeat elements"/>
    <property type="evidence" value="ECO:0000318"/>
    <property type="project" value="GO_Central"/>
</dbReference>
<dbReference type="CDD" id="cd09636">
    <property type="entry name" value="Cas1_I-II-III"/>
    <property type="match status" value="1"/>
</dbReference>
<dbReference type="Gene3D" id="1.20.120.920">
    <property type="entry name" value="CRISPR-associated endonuclease Cas1, C-terminal domain"/>
    <property type="match status" value="1"/>
</dbReference>
<dbReference type="Gene3D" id="3.100.10.20">
    <property type="entry name" value="CRISPR-associated endonuclease Cas1, N-terminal domain"/>
    <property type="match status" value="1"/>
</dbReference>
<dbReference type="HAMAP" id="MF_01470">
    <property type="entry name" value="Cas1"/>
    <property type="match status" value="1"/>
</dbReference>
<dbReference type="InterPro" id="IPR050646">
    <property type="entry name" value="Cas1"/>
</dbReference>
<dbReference type="InterPro" id="IPR002729">
    <property type="entry name" value="CRISPR-assoc_Cas1"/>
</dbReference>
<dbReference type="InterPro" id="IPR042206">
    <property type="entry name" value="CRISPR-assoc_Cas1_C"/>
</dbReference>
<dbReference type="InterPro" id="IPR042211">
    <property type="entry name" value="CRISPR-assoc_Cas1_N"/>
</dbReference>
<dbReference type="NCBIfam" id="TIGR00287">
    <property type="entry name" value="cas1"/>
    <property type="match status" value="1"/>
</dbReference>
<dbReference type="PANTHER" id="PTHR34353">
    <property type="entry name" value="CRISPR-ASSOCIATED ENDONUCLEASE CAS1 1"/>
    <property type="match status" value="1"/>
</dbReference>
<dbReference type="PANTHER" id="PTHR34353:SF2">
    <property type="entry name" value="CRISPR-ASSOCIATED ENDONUCLEASE CAS1 1"/>
    <property type="match status" value="1"/>
</dbReference>
<dbReference type="Pfam" id="PF01867">
    <property type="entry name" value="Cas_Cas1"/>
    <property type="match status" value="1"/>
</dbReference>
<organism>
    <name type="scientific">Pyrobaculum aerophilum (strain ATCC 51768 / DSM 7523 / JCM 9630 / CIP 104966 / NBRC 100827 / IM2)</name>
    <dbReference type="NCBI Taxonomy" id="178306"/>
    <lineage>
        <taxon>Archaea</taxon>
        <taxon>Thermoproteota</taxon>
        <taxon>Thermoprotei</taxon>
        <taxon>Thermoproteales</taxon>
        <taxon>Thermoproteaceae</taxon>
        <taxon>Pyrobaculum</taxon>
    </lineage>
</organism>
<accession>Q8ZZU1</accession>
<comment type="function">
    <text evidence="1">CRISPR (clustered regularly interspaced short palindromic repeat), is an adaptive immune system that provides protection against mobile genetic elements (viruses, transposable elements and conjugative plasmids). CRISPR clusters contain spacers, sequences complementary to antecedent mobile elements, and target invading nucleic acids. CRISPR clusters are transcribed and processed into CRISPR RNA (crRNA). Acts as a dsDNA endonuclease. Involved in the integration of spacer DNA into the CRISPR cassette.</text>
</comment>
<comment type="cofactor">
    <cofactor evidence="1">
        <name>Mg(2+)</name>
        <dbReference type="ChEBI" id="CHEBI:18420"/>
    </cofactor>
    <cofactor evidence="1">
        <name>Mn(2+)</name>
        <dbReference type="ChEBI" id="CHEBI:29035"/>
    </cofactor>
</comment>
<comment type="subunit">
    <text evidence="1">Homodimer, forms a heterotetramer with a Cas2 homodimer.</text>
</comment>
<comment type="similarity">
    <text evidence="1">Belongs to the CRISPR-associated endonuclease Cas1 family.</text>
</comment>
<evidence type="ECO:0000255" key="1">
    <source>
        <dbReference type="HAMAP-Rule" id="MF_01470"/>
    </source>
</evidence>
<keyword id="KW-0051">Antiviral defense</keyword>
<keyword id="KW-0238">DNA-binding</keyword>
<keyword id="KW-0255">Endonuclease</keyword>
<keyword id="KW-0378">Hydrolase</keyword>
<keyword id="KW-0460">Magnesium</keyword>
<keyword id="KW-0464">Manganese</keyword>
<keyword id="KW-0479">Metal-binding</keyword>
<keyword id="KW-0540">Nuclease</keyword>
<keyword id="KW-1185">Reference proteome</keyword>
<reference key="1">
    <citation type="journal article" date="2002" name="Proc. Natl. Acad. Sci. U.S.A.">
        <title>Genome sequence of the hyperthermophilic crenarchaeon Pyrobaculum aerophilum.</title>
        <authorList>
            <person name="Fitz-Gibbon S.T."/>
            <person name="Ladner H."/>
            <person name="Kim U.-J."/>
            <person name="Stetter K.O."/>
            <person name="Simon M.I."/>
            <person name="Miller J.H."/>
        </authorList>
    </citation>
    <scope>NUCLEOTIDE SEQUENCE [LARGE SCALE GENOMIC DNA]</scope>
    <source>
        <strain>ATCC 51768 / DSM 7523 / JCM 9630 / CIP 104966 / NBRC 100827 / IM2</strain>
    </source>
</reference>